<name>OPGH_SHEON</name>
<dbReference type="EC" id="2.4.1.-" evidence="1"/>
<dbReference type="EMBL" id="AE014299">
    <property type="protein sequence ID" value="AAN55155.1"/>
    <property type="molecule type" value="Genomic_DNA"/>
</dbReference>
<dbReference type="RefSeq" id="NP_717711.1">
    <property type="nucleotide sequence ID" value="NC_004347.2"/>
</dbReference>
<dbReference type="RefSeq" id="WP_011072171.1">
    <property type="nucleotide sequence ID" value="NC_004347.2"/>
</dbReference>
<dbReference type="STRING" id="211586.SO_2108"/>
<dbReference type="CAZy" id="GT2">
    <property type="family name" value="Glycosyltransferase Family 2"/>
</dbReference>
<dbReference type="PaxDb" id="211586-SO_2108"/>
<dbReference type="KEGG" id="son:SO_2108"/>
<dbReference type="PATRIC" id="fig|211586.12.peg.2024"/>
<dbReference type="eggNOG" id="COG2943">
    <property type="taxonomic scope" value="Bacteria"/>
</dbReference>
<dbReference type="HOGENOM" id="CLU_015730_1_0_6"/>
<dbReference type="OrthoDB" id="9775281at2"/>
<dbReference type="PhylomeDB" id="Q8EF78"/>
<dbReference type="BioCyc" id="SONE211586:G1GMP-1938-MONOMER"/>
<dbReference type="UniPathway" id="UPA00637"/>
<dbReference type="Proteomes" id="UP000008186">
    <property type="component" value="Chromosome"/>
</dbReference>
<dbReference type="GO" id="GO:0005886">
    <property type="term" value="C:plasma membrane"/>
    <property type="evidence" value="ECO:0000318"/>
    <property type="project" value="GO_Central"/>
</dbReference>
<dbReference type="GO" id="GO:0016758">
    <property type="term" value="F:hexosyltransferase activity"/>
    <property type="evidence" value="ECO:0000318"/>
    <property type="project" value="GO_Central"/>
</dbReference>
<dbReference type="GO" id="GO:0009250">
    <property type="term" value="P:glucan biosynthetic process"/>
    <property type="evidence" value="ECO:0007669"/>
    <property type="project" value="UniProtKB-UniRule"/>
</dbReference>
<dbReference type="CDD" id="cd04191">
    <property type="entry name" value="Glucan_BSP_MdoH"/>
    <property type="match status" value="1"/>
</dbReference>
<dbReference type="FunFam" id="3.90.550.10:FF:000047">
    <property type="entry name" value="Glucans biosynthesis glucosyltransferase H"/>
    <property type="match status" value="1"/>
</dbReference>
<dbReference type="Gene3D" id="3.90.550.10">
    <property type="entry name" value="Spore Coat Polysaccharide Biosynthesis Protein SpsA, Chain A"/>
    <property type="match status" value="1"/>
</dbReference>
<dbReference type="HAMAP" id="MF_01072">
    <property type="entry name" value="MdoH_OpgH"/>
    <property type="match status" value="1"/>
</dbReference>
<dbReference type="InterPro" id="IPR023725">
    <property type="entry name" value="Glucans_biosynth_gluTrFase_H"/>
</dbReference>
<dbReference type="InterPro" id="IPR001173">
    <property type="entry name" value="Glyco_trans_2-like"/>
</dbReference>
<dbReference type="InterPro" id="IPR050321">
    <property type="entry name" value="Glycosyltr_2/OpgH_subfam"/>
</dbReference>
<dbReference type="InterPro" id="IPR029044">
    <property type="entry name" value="Nucleotide-diphossugar_trans"/>
</dbReference>
<dbReference type="NCBIfam" id="NF003956">
    <property type="entry name" value="PRK05454.1-3"/>
    <property type="match status" value="1"/>
</dbReference>
<dbReference type="NCBIfam" id="NF003958">
    <property type="entry name" value="PRK05454.2-1"/>
    <property type="match status" value="1"/>
</dbReference>
<dbReference type="NCBIfam" id="NF003962">
    <property type="entry name" value="PRK05454.2-5"/>
    <property type="match status" value="1"/>
</dbReference>
<dbReference type="PANTHER" id="PTHR43867">
    <property type="entry name" value="CELLULOSE SYNTHASE CATALYTIC SUBUNIT A [UDP-FORMING]"/>
    <property type="match status" value="1"/>
</dbReference>
<dbReference type="PANTHER" id="PTHR43867:SF5">
    <property type="entry name" value="GLUCANS BIOSYNTHESIS GLUCOSYLTRANSFERASE H"/>
    <property type="match status" value="1"/>
</dbReference>
<dbReference type="Pfam" id="PF13632">
    <property type="entry name" value="Glyco_trans_2_3"/>
    <property type="match status" value="1"/>
</dbReference>
<dbReference type="SUPFAM" id="SSF53448">
    <property type="entry name" value="Nucleotide-diphospho-sugar transferases"/>
    <property type="match status" value="1"/>
</dbReference>
<accession>Q8EF78</accession>
<protein>
    <recommendedName>
        <fullName evidence="1">Glucans biosynthesis glucosyltransferase H</fullName>
        <ecNumber evidence="1">2.4.1.-</ecNumber>
    </recommendedName>
</protein>
<keyword id="KW-0997">Cell inner membrane</keyword>
<keyword id="KW-1003">Cell membrane</keyword>
<keyword id="KW-0328">Glycosyltransferase</keyword>
<keyword id="KW-0472">Membrane</keyword>
<keyword id="KW-1185">Reference proteome</keyword>
<keyword id="KW-0808">Transferase</keyword>
<keyword id="KW-0812">Transmembrane</keyword>
<keyword id="KW-1133">Transmembrane helix</keyword>
<organism>
    <name type="scientific">Shewanella oneidensis (strain ATCC 700550 / JCM 31522 / CIP 106686 / LMG 19005 / NCIMB 14063 / MR-1)</name>
    <dbReference type="NCBI Taxonomy" id="211586"/>
    <lineage>
        <taxon>Bacteria</taxon>
        <taxon>Pseudomonadati</taxon>
        <taxon>Pseudomonadota</taxon>
        <taxon>Gammaproteobacteria</taxon>
        <taxon>Alteromonadales</taxon>
        <taxon>Shewanellaceae</taxon>
        <taxon>Shewanella</taxon>
    </lineage>
</organism>
<sequence>MTVSESSVLDTEVLVGGSAMPNERPGPMEPQSLSQMPEGFPRRSTVANGVRSRASRRFFVVGGALLLSSFAIYEMGAVFSIGGITPLEYLMLALFAINFCWIALAFCSGIAGFLLLLKKPKPNELAQTELHTRTAILMPTYNESPDRVFSAVSVMAEALSQTGHGHAFDWFILSDTTDPEIALLEEQAFLVLRQETHKHSRVYYRRRRKNVARKAGNVADFCRRWGSRYDHLLVLDADSLMESSTITGLAQRMQADPDAGLIQTIPSLINGTTLMARLQQFAARIYGPVIGTGLGWWVQKEGNFWGHNAIIRTEAFMGAAGLPNLKGKPPFGGHILSHDFVEAALIRRAGWSVVIAYDLPGSYEECPPSIVDLAVRDRRWCQGNLQHSRILPTKGLHWVSRLHLMTGIMAYLSSPFWLLLILTGLMLALQAHFIRPEYFTDQFSLFPTWPIMDSDRALRLFYITMVVLFGPKIFGVLLLLKDGKFARSVGGRIKAMFSVLFEVILSALIAPIMMFIHCGAVMSILMGRDSGWSPQRRDDGSMPWLTLIYRHRWHMLAGVMLGYAAILDSLTLLAWMSPALIGLWLAVPISAWTGSIKIGEFFKRIGILATPEERNPAPICIRAQEARAAYQSHIEQPWTLAQLLKDPALMELHLAMVDKQPLRAAGTPIEPVEAIVHVKVHEAQCQQSALALFNRQEMALVLANPLMLRSLQKLPEQFVPEDLVSFC</sequence>
<gene>
    <name evidence="1" type="primary">opgH</name>
    <name type="synonym">mdoH</name>
    <name type="ordered locus">SO_2108</name>
</gene>
<reference key="1">
    <citation type="journal article" date="2002" name="Nat. Biotechnol.">
        <title>Genome sequence of the dissimilatory metal ion-reducing bacterium Shewanella oneidensis.</title>
        <authorList>
            <person name="Heidelberg J.F."/>
            <person name="Paulsen I.T."/>
            <person name="Nelson K.E."/>
            <person name="Gaidos E.J."/>
            <person name="Nelson W.C."/>
            <person name="Read T.D."/>
            <person name="Eisen J.A."/>
            <person name="Seshadri R."/>
            <person name="Ward N.L."/>
            <person name="Methe B.A."/>
            <person name="Clayton R.A."/>
            <person name="Meyer T."/>
            <person name="Tsapin A."/>
            <person name="Scott J."/>
            <person name="Beanan M.J."/>
            <person name="Brinkac L.M."/>
            <person name="Daugherty S.C."/>
            <person name="DeBoy R.T."/>
            <person name="Dodson R.J."/>
            <person name="Durkin A.S."/>
            <person name="Haft D.H."/>
            <person name="Kolonay J.F."/>
            <person name="Madupu R."/>
            <person name="Peterson J.D."/>
            <person name="Umayam L.A."/>
            <person name="White O."/>
            <person name="Wolf A.M."/>
            <person name="Vamathevan J.J."/>
            <person name="Weidman J.F."/>
            <person name="Impraim M."/>
            <person name="Lee K."/>
            <person name="Berry K.J."/>
            <person name="Lee C."/>
            <person name="Mueller J."/>
            <person name="Khouri H.M."/>
            <person name="Gill J."/>
            <person name="Utterback T.R."/>
            <person name="McDonald L.A."/>
            <person name="Feldblyum T.V."/>
            <person name="Smith H.O."/>
            <person name="Venter J.C."/>
            <person name="Nealson K.H."/>
            <person name="Fraser C.M."/>
        </authorList>
    </citation>
    <scope>NUCLEOTIDE SEQUENCE [LARGE SCALE GENOMIC DNA]</scope>
    <source>
        <strain>ATCC 700550 / JCM 31522 / CIP 106686 / LMG 19005 / NCIMB 14063 / MR-1</strain>
    </source>
</reference>
<evidence type="ECO:0000255" key="1">
    <source>
        <dbReference type="HAMAP-Rule" id="MF_01072"/>
    </source>
</evidence>
<evidence type="ECO:0000256" key="2">
    <source>
        <dbReference type="SAM" id="MobiDB-lite"/>
    </source>
</evidence>
<comment type="function">
    <text evidence="1">Involved in the biosynthesis of osmoregulated periplasmic glucans (OPGs).</text>
</comment>
<comment type="pathway">
    <text evidence="1">Glycan metabolism; osmoregulated periplasmic glucan (OPG) biosynthesis.</text>
</comment>
<comment type="subcellular location">
    <subcellularLocation>
        <location evidence="1">Cell inner membrane</location>
        <topology evidence="1">Multi-pass membrane protein</topology>
    </subcellularLocation>
</comment>
<comment type="similarity">
    <text evidence="1">Belongs to the glycosyltransferase 2 family. OpgH subfamily.</text>
</comment>
<feature type="chain" id="PRO_0000210363" description="Glucans biosynthesis glucosyltransferase H">
    <location>
        <begin position="1"/>
        <end position="727"/>
    </location>
</feature>
<feature type="transmembrane region" description="Helical" evidence="1">
    <location>
        <begin position="58"/>
        <end position="80"/>
    </location>
</feature>
<feature type="transmembrane region" description="Helical" evidence="1">
    <location>
        <begin position="95"/>
        <end position="117"/>
    </location>
</feature>
<feature type="transmembrane region" description="Helical" evidence="1">
    <location>
        <begin position="407"/>
        <end position="429"/>
    </location>
</feature>
<feature type="transmembrane region" description="Helical" evidence="1">
    <location>
        <begin position="457"/>
        <end position="479"/>
    </location>
</feature>
<feature type="transmembrane region" description="Helical" evidence="1">
    <location>
        <begin position="499"/>
        <end position="521"/>
    </location>
</feature>
<feature type="transmembrane region" description="Helical" evidence="1">
    <location>
        <begin position="572"/>
        <end position="594"/>
    </location>
</feature>
<feature type="region of interest" description="Disordered" evidence="2">
    <location>
        <begin position="17"/>
        <end position="41"/>
    </location>
</feature>
<proteinExistence type="inferred from homology"/>